<proteinExistence type="evidence at protein level"/>
<gene>
    <name type="primary">pflA</name>
    <name type="synonym">act</name>
    <name type="ordered locus">b0902</name>
    <name type="ordered locus">JW0885</name>
</gene>
<protein>
    <recommendedName>
        <fullName>Pyruvate formate-lyase 1-activating enzyme</fullName>
        <ecNumber>1.97.1.4</ecNumber>
    </recommendedName>
    <alternativeName>
        <fullName>Formate-C-acetyltransferase-activating enzyme 1</fullName>
    </alternativeName>
    <alternativeName>
        <fullName>PFL-activating enzyme 1</fullName>
    </alternativeName>
</protein>
<dbReference type="EC" id="1.97.1.4"/>
<dbReference type="EMBL" id="X08035">
    <property type="protein sequence ID" value="CAA30829.1"/>
    <property type="molecule type" value="Genomic_DNA"/>
</dbReference>
<dbReference type="EMBL" id="U00096">
    <property type="protein sequence ID" value="AAC73988.1"/>
    <property type="molecule type" value="Genomic_DNA"/>
</dbReference>
<dbReference type="EMBL" id="AP009048">
    <property type="protein sequence ID" value="BAA35637.1"/>
    <property type="molecule type" value="Genomic_DNA"/>
</dbReference>
<dbReference type="PIR" id="S01789">
    <property type="entry name" value="S01789"/>
</dbReference>
<dbReference type="RefSeq" id="NP_415422.1">
    <property type="nucleotide sequence ID" value="NC_000913.3"/>
</dbReference>
<dbReference type="RefSeq" id="WP_000111043.1">
    <property type="nucleotide sequence ID" value="NZ_STEB01000006.1"/>
</dbReference>
<dbReference type="PDB" id="3C8F">
    <property type="method" value="X-ray"/>
    <property type="resolution" value="2.25 A"/>
    <property type="chains" value="A=2-246"/>
</dbReference>
<dbReference type="PDB" id="3CB8">
    <property type="method" value="X-ray"/>
    <property type="resolution" value="2.77 A"/>
    <property type="chains" value="A=2-246"/>
</dbReference>
<dbReference type="PDB" id="8FO0">
    <property type="method" value="X-ray"/>
    <property type="resolution" value="1.69 A"/>
    <property type="chains" value="A=2-246"/>
</dbReference>
<dbReference type="PDB" id="8FOL">
    <property type="method" value="X-ray"/>
    <property type="resolution" value="2.65 A"/>
    <property type="chains" value="A=2-246"/>
</dbReference>
<dbReference type="PDB" id="8FSI">
    <property type="method" value="X-ray"/>
    <property type="resolution" value="1.46 A"/>
    <property type="chains" value="A=2-246"/>
</dbReference>
<dbReference type="PDBsum" id="3C8F"/>
<dbReference type="PDBsum" id="3CB8"/>
<dbReference type="PDBsum" id="8FO0"/>
<dbReference type="PDBsum" id="8FOL"/>
<dbReference type="PDBsum" id="8FSI"/>
<dbReference type="SMR" id="P0A9N4"/>
<dbReference type="BioGRID" id="4259353">
    <property type="interactions" value="31"/>
</dbReference>
<dbReference type="BioGRID" id="849891">
    <property type="interactions" value="2"/>
</dbReference>
<dbReference type="DIP" id="DIP-35915N"/>
<dbReference type="FunCoup" id="P0A9N4">
    <property type="interactions" value="103"/>
</dbReference>
<dbReference type="IntAct" id="P0A9N4">
    <property type="interactions" value="19"/>
</dbReference>
<dbReference type="STRING" id="511145.b0902"/>
<dbReference type="jPOST" id="P0A9N4"/>
<dbReference type="PaxDb" id="511145-b0902"/>
<dbReference type="EnsemblBacteria" id="AAC73988">
    <property type="protein sequence ID" value="AAC73988"/>
    <property type="gene ID" value="b0902"/>
</dbReference>
<dbReference type="GeneID" id="93776516"/>
<dbReference type="GeneID" id="945517"/>
<dbReference type="KEGG" id="ecj:JW0885"/>
<dbReference type="KEGG" id="eco:b0902"/>
<dbReference type="KEGG" id="ecoc:C3026_05570"/>
<dbReference type="PATRIC" id="fig|1411691.4.peg.1374"/>
<dbReference type="EchoBASE" id="EB0027"/>
<dbReference type="eggNOG" id="COG1180">
    <property type="taxonomic scope" value="Bacteria"/>
</dbReference>
<dbReference type="HOGENOM" id="CLU_058969_1_0_6"/>
<dbReference type="InParanoid" id="P0A9N4"/>
<dbReference type="OMA" id="IGVPNKR"/>
<dbReference type="OrthoDB" id="9782387at2"/>
<dbReference type="PhylomeDB" id="P0A9N4"/>
<dbReference type="BioCyc" id="EcoCyc:PFLACTENZ-MONOMER"/>
<dbReference type="BRENDA" id="1.97.1.4">
    <property type="organism ID" value="2026"/>
</dbReference>
<dbReference type="EvolutionaryTrace" id="P0A9N4"/>
<dbReference type="PRO" id="PR:P0A9N4"/>
<dbReference type="Proteomes" id="UP000000625">
    <property type="component" value="Chromosome"/>
</dbReference>
<dbReference type="GO" id="GO:0005829">
    <property type="term" value="C:cytosol"/>
    <property type="evidence" value="ECO:0000314"/>
    <property type="project" value="EcoCyc"/>
</dbReference>
<dbReference type="GO" id="GO:0051539">
    <property type="term" value="F:4 iron, 4 sulfur cluster binding"/>
    <property type="evidence" value="ECO:0000314"/>
    <property type="project" value="EcoCyc"/>
</dbReference>
<dbReference type="GO" id="GO:0043365">
    <property type="term" value="F:[formate-C-acetyltransferase]-activating enzyme activity"/>
    <property type="evidence" value="ECO:0000314"/>
    <property type="project" value="EcoCyc"/>
</dbReference>
<dbReference type="GO" id="GO:0016491">
    <property type="term" value="F:oxidoreductase activity"/>
    <property type="evidence" value="ECO:0000314"/>
    <property type="project" value="EcoliWiki"/>
</dbReference>
<dbReference type="GO" id="GO:0030955">
    <property type="term" value="F:potassium ion binding"/>
    <property type="evidence" value="ECO:0000314"/>
    <property type="project" value="EcoCyc"/>
</dbReference>
<dbReference type="GO" id="GO:0006974">
    <property type="term" value="P:DNA damage response"/>
    <property type="evidence" value="ECO:0000270"/>
    <property type="project" value="EcoliWiki"/>
</dbReference>
<dbReference type="GO" id="GO:0006006">
    <property type="term" value="P:glucose metabolic process"/>
    <property type="evidence" value="ECO:0007669"/>
    <property type="project" value="UniProtKB-KW"/>
</dbReference>
<dbReference type="GO" id="GO:0051604">
    <property type="term" value="P:protein maturation"/>
    <property type="evidence" value="ECO:0000314"/>
    <property type="project" value="EcoCyc"/>
</dbReference>
<dbReference type="CDD" id="cd01335">
    <property type="entry name" value="Radical_SAM"/>
    <property type="match status" value="1"/>
</dbReference>
<dbReference type="FunFam" id="3.20.20.70:FF:000050">
    <property type="entry name" value="Pyruvate formate-lyase-activating enzyme"/>
    <property type="match status" value="1"/>
</dbReference>
<dbReference type="Gene3D" id="3.20.20.70">
    <property type="entry name" value="Aldolase class I"/>
    <property type="match status" value="1"/>
</dbReference>
<dbReference type="InterPro" id="IPR013785">
    <property type="entry name" value="Aldolase_TIM"/>
</dbReference>
<dbReference type="InterPro" id="IPR034457">
    <property type="entry name" value="Organic_radical-activating"/>
</dbReference>
<dbReference type="InterPro" id="IPR012839">
    <property type="entry name" value="Organic_radical_activase"/>
</dbReference>
<dbReference type="InterPro" id="IPR012838">
    <property type="entry name" value="PFL1_activating"/>
</dbReference>
<dbReference type="InterPro" id="IPR034465">
    <property type="entry name" value="Pyruvate_for-lyase_activase"/>
</dbReference>
<dbReference type="InterPro" id="IPR001989">
    <property type="entry name" value="Radical_activat_CS"/>
</dbReference>
<dbReference type="InterPro" id="IPR007197">
    <property type="entry name" value="rSAM"/>
</dbReference>
<dbReference type="NCBIfam" id="TIGR02493">
    <property type="entry name" value="PFLA"/>
    <property type="match status" value="1"/>
</dbReference>
<dbReference type="NCBIfam" id="NF008356">
    <property type="entry name" value="PRK11145.1"/>
    <property type="match status" value="1"/>
</dbReference>
<dbReference type="PANTHER" id="PTHR30352:SF5">
    <property type="entry name" value="PYRUVATE FORMATE-LYASE 1-ACTIVATING ENZYME"/>
    <property type="match status" value="1"/>
</dbReference>
<dbReference type="PANTHER" id="PTHR30352">
    <property type="entry name" value="PYRUVATE FORMATE-LYASE-ACTIVATING ENZYME"/>
    <property type="match status" value="1"/>
</dbReference>
<dbReference type="Pfam" id="PF13353">
    <property type="entry name" value="Fer4_12"/>
    <property type="match status" value="1"/>
</dbReference>
<dbReference type="Pfam" id="PF04055">
    <property type="entry name" value="Radical_SAM"/>
    <property type="match status" value="1"/>
</dbReference>
<dbReference type="PIRSF" id="PIRSF000371">
    <property type="entry name" value="PFL_act_enz"/>
    <property type="match status" value="1"/>
</dbReference>
<dbReference type="SFLD" id="SFLDG01066">
    <property type="entry name" value="organic_radical-activating_enz"/>
    <property type="match status" value="1"/>
</dbReference>
<dbReference type="SFLD" id="SFLDF00278">
    <property type="entry name" value="pyruvate_formate-lyase_activas"/>
    <property type="match status" value="1"/>
</dbReference>
<dbReference type="SUPFAM" id="SSF102114">
    <property type="entry name" value="Radical SAM enzymes"/>
    <property type="match status" value="1"/>
</dbReference>
<dbReference type="PROSITE" id="PS01087">
    <property type="entry name" value="RADICAL_ACTIVATING"/>
    <property type="match status" value="1"/>
</dbReference>
<dbReference type="PROSITE" id="PS51918">
    <property type="entry name" value="RADICAL_SAM"/>
    <property type="match status" value="1"/>
</dbReference>
<evidence type="ECO:0000255" key="1">
    <source>
        <dbReference type="PROSITE-ProRule" id="PRU01266"/>
    </source>
</evidence>
<evidence type="ECO:0000269" key="2">
    <source>
    </source>
</evidence>
<evidence type="ECO:0000305" key="3"/>
<evidence type="ECO:0007829" key="4">
    <source>
        <dbReference type="PDB" id="8FSI"/>
    </source>
</evidence>
<feature type="initiator methionine" description="Removed">
    <location>
        <position position="1"/>
    </location>
</feature>
<feature type="chain" id="PRO_0000200522" description="Pyruvate formate-lyase 1-activating enzyme">
    <location>
        <begin position="2"/>
        <end position="246"/>
    </location>
</feature>
<feature type="domain" description="Radical SAM core" evidence="1">
    <location>
        <begin position="16"/>
        <end position="239"/>
    </location>
</feature>
<feature type="binding site" evidence="2">
    <location>
        <position position="30"/>
    </location>
    <ligand>
        <name>[4Fe-4S] cluster</name>
        <dbReference type="ChEBI" id="CHEBI:49883"/>
        <note>4Fe-4S-S-AdoMet</note>
    </ligand>
</feature>
<feature type="binding site" evidence="2">
    <location>
        <position position="34"/>
    </location>
    <ligand>
        <name>[4Fe-4S] cluster</name>
        <dbReference type="ChEBI" id="CHEBI:49883"/>
        <note>4Fe-4S-S-AdoMet</note>
    </ligand>
</feature>
<feature type="binding site" evidence="2">
    <location>
        <begin position="36"/>
        <end position="38"/>
    </location>
    <ligand>
        <name>S-adenosyl-L-methionine</name>
        <dbReference type="ChEBI" id="CHEBI:59789"/>
    </ligand>
</feature>
<feature type="binding site" evidence="2">
    <location>
        <position position="37"/>
    </location>
    <ligand>
        <name>[4Fe-4S] cluster</name>
        <dbReference type="ChEBI" id="CHEBI:49883"/>
        <note>4Fe-4S-S-AdoMet</note>
    </ligand>
</feature>
<feature type="binding site" evidence="2">
    <location>
        <position position="79"/>
    </location>
    <ligand>
        <name>S-adenosyl-L-methionine</name>
        <dbReference type="ChEBI" id="CHEBI:59789"/>
    </ligand>
</feature>
<feature type="binding site" evidence="2">
    <location>
        <begin position="130"/>
        <end position="132"/>
    </location>
    <ligand>
        <name>S-adenosyl-L-methionine</name>
        <dbReference type="ChEBI" id="CHEBI:59789"/>
    </ligand>
</feature>
<feature type="binding site" evidence="2">
    <location>
        <position position="203"/>
    </location>
    <ligand>
        <name>S-adenosyl-L-methionine</name>
        <dbReference type="ChEBI" id="CHEBI:59789"/>
    </ligand>
</feature>
<feature type="strand" evidence="4">
    <location>
        <begin position="5"/>
        <end position="14"/>
    </location>
</feature>
<feature type="strand" evidence="4">
    <location>
        <begin position="16"/>
        <end position="28"/>
    </location>
</feature>
<feature type="helix" evidence="4">
    <location>
        <begin position="40"/>
        <end position="42"/>
    </location>
</feature>
<feature type="strand" evidence="4">
    <location>
        <begin position="48"/>
        <end position="51"/>
    </location>
</feature>
<feature type="helix" evidence="4">
    <location>
        <begin position="53"/>
        <end position="61"/>
    </location>
</feature>
<feature type="helix" evidence="4">
    <location>
        <begin position="62"/>
        <end position="66"/>
    </location>
</feature>
<feature type="strand" evidence="4">
    <location>
        <begin position="73"/>
        <end position="79"/>
    </location>
</feature>
<feature type="helix" evidence="4">
    <location>
        <begin position="81"/>
        <end position="84"/>
    </location>
</feature>
<feature type="helix" evidence="4">
    <location>
        <begin position="85"/>
        <end position="97"/>
    </location>
</feature>
<feature type="strand" evidence="4">
    <location>
        <begin position="102"/>
        <end position="106"/>
    </location>
</feature>
<feature type="helix" evidence="4">
    <location>
        <begin position="115"/>
        <end position="122"/>
    </location>
</feature>
<feature type="strand" evidence="4">
    <location>
        <begin position="125"/>
        <end position="130"/>
    </location>
</feature>
<feature type="helix" evidence="4">
    <location>
        <begin position="136"/>
        <end position="143"/>
    </location>
</feature>
<feature type="helix" evidence="4">
    <location>
        <begin position="148"/>
        <end position="159"/>
    </location>
</feature>
<feature type="strand" evidence="4">
    <location>
        <begin position="164"/>
        <end position="170"/>
    </location>
</feature>
<feature type="turn" evidence="4">
    <location>
        <begin position="172"/>
        <end position="174"/>
    </location>
</feature>
<feature type="helix" evidence="4">
    <location>
        <begin position="178"/>
        <end position="188"/>
    </location>
</feature>
<feature type="strand" evidence="4">
    <location>
        <begin position="194"/>
        <end position="201"/>
    </location>
</feature>
<feature type="helix" evidence="4">
    <location>
        <begin position="207"/>
        <end position="212"/>
    </location>
</feature>
<feature type="turn" evidence="4">
    <location>
        <begin position="218"/>
        <end position="221"/>
    </location>
</feature>
<feature type="helix" evidence="4">
    <location>
        <begin position="227"/>
        <end position="238"/>
    </location>
</feature>
<feature type="turn" evidence="4">
    <location>
        <begin position="239"/>
        <end position="241"/>
    </location>
</feature>
<comment type="function">
    <text>Activation of pyruvate formate-lyase 1 under anaerobic conditions by generation of an organic free radical, using S-adenosylmethionine and reduced flavodoxin as cosubstrates to produce 5'-deoxy-adenosine.</text>
</comment>
<comment type="catalytic activity">
    <reaction>
        <text>glycyl-[formate C-acetyltransferase] + reduced [flavodoxin] + S-adenosyl-L-methionine = glycin-2-yl radical-[formate C-acetyltransferase] + semiquinone [flavodoxin] + 5'-deoxyadenosine + L-methionine + H(+)</text>
        <dbReference type="Rhea" id="RHEA:19225"/>
        <dbReference type="Rhea" id="RHEA-COMP:10622"/>
        <dbReference type="Rhea" id="RHEA-COMP:12190"/>
        <dbReference type="Rhea" id="RHEA-COMP:12191"/>
        <dbReference type="Rhea" id="RHEA-COMP:14480"/>
        <dbReference type="ChEBI" id="CHEBI:15378"/>
        <dbReference type="ChEBI" id="CHEBI:17319"/>
        <dbReference type="ChEBI" id="CHEBI:29947"/>
        <dbReference type="ChEBI" id="CHEBI:32722"/>
        <dbReference type="ChEBI" id="CHEBI:57618"/>
        <dbReference type="ChEBI" id="CHEBI:57844"/>
        <dbReference type="ChEBI" id="CHEBI:59789"/>
        <dbReference type="ChEBI" id="CHEBI:140311"/>
        <dbReference type="EC" id="1.97.1.4"/>
    </reaction>
</comment>
<comment type="cofactor">
    <cofactor evidence="2">
        <name>[4Fe-4S] cluster</name>
        <dbReference type="ChEBI" id="CHEBI:49883"/>
    </cofactor>
    <text evidence="2">Binds 1 [4Fe-4S] cluster. The cluster is coordinated with 3 cysteines and an exchangeable S-adenosyl-L-methionine.</text>
</comment>
<comment type="subunit">
    <text evidence="2">Monomer.</text>
</comment>
<comment type="interaction">
    <interactant intactId="EBI-1114060">
        <id>P0A9N4</id>
    </interactant>
    <interactant intactId="EBI-9129853">
        <id>P64455</id>
        <label>ydcY</label>
    </interactant>
    <organismsDiffer>false</organismsDiffer>
    <experiments>4</experiments>
</comment>
<comment type="subcellular location">
    <subcellularLocation>
        <location>Cytoplasm</location>
    </subcellularLocation>
</comment>
<comment type="similarity">
    <text evidence="3">Belongs to the organic radical-activating enzymes family.</text>
</comment>
<accession>P0A9N4</accession>
<accession>P09374</accession>
<organism>
    <name type="scientific">Escherichia coli (strain K12)</name>
    <dbReference type="NCBI Taxonomy" id="83333"/>
    <lineage>
        <taxon>Bacteria</taxon>
        <taxon>Pseudomonadati</taxon>
        <taxon>Pseudomonadota</taxon>
        <taxon>Gammaproteobacteria</taxon>
        <taxon>Enterobacterales</taxon>
        <taxon>Enterobacteriaceae</taxon>
        <taxon>Escherichia</taxon>
    </lineage>
</organism>
<name>PFLA_ECOLI</name>
<reference key="1">
    <citation type="journal article" date="1988" name="Eur. J. Biochem.">
        <title>Primary structures of Escherichia coli pyruvate formate-lyase and pyruvate-formate-lyase-activating enzyme deduced from the DNA nucleotide sequences.</title>
        <authorList>
            <person name="Roedel W."/>
            <person name="Plaga W."/>
            <person name="Frank R."/>
            <person name="Knappe J."/>
        </authorList>
    </citation>
    <scope>NUCLEOTIDE SEQUENCE [GENOMIC DNA]</scope>
    <scope>PARTIAL PROTEIN SEQUENCE</scope>
    <source>
        <strain>K12</strain>
    </source>
</reference>
<reference key="2">
    <citation type="journal article" date="1996" name="DNA Res.">
        <title>A 718-kb DNA sequence of the Escherichia coli K-12 genome corresponding to the 12.7-28.0 min region on the linkage map.</title>
        <authorList>
            <person name="Oshima T."/>
            <person name="Aiba H."/>
            <person name="Baba T."/>
            <person name="Fujita K."/>
            <person name="Hayashi K."/>
            <person name="Honjo A."/>
            <person name="Ikemoto K."/>
            <person name="Inada T."/>
            <person name="Itoh T."/>
            <person name="Kajihara M."/>
            <person name="Kanai K."/>
            <person name="Kashimoto K."/>
            <person name="Kimura S."/>
            <person name="Kitagawa M."/>
            <person name="Makino K."/>
            <person name="Masuda S."/>
            <person name="Miki T."/>
            <person name="Mizobuchi K."/>
            <person name="Mori H."/>
            <person name="Motomura K."/>
            <person name="Nakamura Y."/>
            <person name="Nashimoto H."/>
            <person name="Nishio Y."/>
            <person name="Saito N."/>
            <person name="Sampei G."/>
            <person name="Seki Y."/>
            <person name="Tagami H."/>
            <person name="Takemoto K."/>
            <person name="Wada C."/>
            <person name="Yamamoto Y."/>
            <person name="Yano M."/>
            <person name="Horiuchi T."/>
        </authorList>
    </citation>
    <scope>NUCLEOTIDE SEQUENCE [LARGE SCALE GENOMIC DNA]</scope>
    <source>
        <strain>K12 / W3110 / ATCC 27325 / DSM 5911</strain>
    </source>
</reference>
<reference key="3">
    <citation type="journal article" date="1997" name="Science">
        <title>The complete genome sequence of Escherichia coli K-12.</title>
        <authorList>
            <person name="Blattner F.R."/>
            <person name="Plunkett G. III"/>
            <person name="Bloch C.A."/>
            <person name="Perna N.T."/>
            <person name="Burland V."/>
            <person name="Riley M."/>
            <person name="Collado-Vides J."/>
            <person name="Glasner J.D."/>
            <person name="Rode C.K."/>
            <person name="Mayhew G.F."/>
            <person name="Gregor J."/>
            <person name="Davis N.W."/>
            <person name="Kirkpatrick H.A."/>
            <person name="Goeden M.A."/>
            <person name="Rose D.J."/>
            <person name="Mau B."/>
            <person name="Shao Y."/>
        </authorList>
    </citation>
    <scope>NUCLEOTIDE SEQUENCE [LARGE SCALE GENOMIC DNA]</scope>
    <source>
        <strain>K12 / MG1655 / ATCC 47076</strain>
    </source>
</reference>
<reference key="4">
    <citation type="journal article" date="2006" name="Mol. Syst. Biol.">
        <title>Highly accurate genome sequences of Escherichia coli K-12 strains MG1655 and W3110.</title>
        <authorList>
            <person name="Hayashi K."/>
            <person name="Morooka N."/>
            <person name="Yamamoto Y."/>
            <person name="Fujita K."/>
            <person name="Isono K."/>
            <person name="Choi S."/>
            <person name="Ohtsubo E."/>
            <person name="Baba T."/>
            <person name="Wanner B.L."/>
            <person name="Mori H."/>
            <person name="Horiuchi T."/>
        </authorList>
    </citation>
    <scope>NUCLEOTIDE SEQUENCE [LARGE SCALE GENOMIC DNA]</scope>
    <source>
        <strain>K12 / W3110 / ATCC 27325 / DSM 5911</strain>
    </source>
</reference>
<reference key="5">
    <citation type="journal article" date="2008" name="Proc. Natl. Acad. Sci. U.S.A.">
        <title>Structural basis for glycyl radical formation by pyruvate formate-lyase activating enzyme.</title>
        <authorList>
            <person name="Vey J.L."/>
            <person name="Yang J."/>
            <person name="Li M."/>
            <person name="Broderick W.E."/>
            <person name="Broderick J.B."/>
            <person name="Drennan C.L."/>
        </authorList>
    </citation>
    <scope>X-RAY CRYSTALLOGRAPHY (2.25 ANGSTROMS) IN COMPLEXES WITH IRON-SULFUR (4FE-4S); SAM AND A PEPTIDE SUBSTRATE VAL-SER-GLY-TYR-ALA-VAL</scope>
    <scope>COFACTOR</scope>
    <scope>SUBUNIT</scope>
</reference>
<keyword id="KW-0002">3D-structure</keyword>
<keyword id="KW-0004">4Fe-4S</keyword>
<keyword id="KW-0119">Carbohydrate metabolism</keyword>
<keyword id="KW-0963">Cytoplasm</keyword>
<keyword id="KW-0903">Direct protein sequencing</keyword>
<keyword id="KW-0313">Glucose metabolism</keyword>
<keyword id="KW-0408">Iron</keyword>
<keyword id="KW-0411">Iron-sulfur</keyword>
<keyword id="KW-0479">Metal-binding</keyword>
<keyword id="KW-0560">Oxidoreductase</keyword>
<keyword id="KW-1185">Reference proteome</keyword>
<keyword id="KW-0949">S-adenosyl-L-methionine</keyword>
<sequence>MSVIGRIHSFESCGTVDGPGIRFITFFQGCLMRCLYCHNRDTWDTHGGKEVTVEDLMKEVVTYRHFMNASGGGVTASGGEAILQAEFVRDWFRACKKEGIHTCLDTNGFVRRYDPVIDELLEVTDLVMLDLKQMNDEIHQNLVGVSNHRTLEFAKYLANKNVKVWIRYVVVPGWSDDDDSAHRLGEFTRDMGNVEKIELLPYHELGKHKWVAMGEEYKLDGVKPPKKETMERVKGILEQYGHKVMF</sequence>